<evidence type="ECO:0000255" key="1">
    <source>
        <dbReference type="HAMAP-Rule" id="MF_00823"/>
    </source>
</evidence>
<evidence type="ECO:0000255" key="2">
    <source>
        <dbReference type="PROSITE-ProRule" id="PRU01137"/>
    </source>
</evidence>
<feature type="chain" id="PRO_1000062601" description="Acetyl-coenzyme A carboxylase carboxyl transferase subunit alpha">
    <location>
        <begin position="1"/>
        <end position="312"/>
    </location>
</feature>
<feature type="domain" description="CoA carboxyltransferase C-terminal" evidence="2">
    <location>
        <begin position="36"/>
        <end position="286"/>
    </location>
</feature>
<protein>
    <recommendedName>
        <fullName evidence="1">Acetyl-coenzyme A carboxylase carboxyl transferase subunit alpha</fullName>
        <shortName evidence="1">ACCase subunit alpha</shortName>
        <shortName evidence="1">Acetyl-CoA carboxylase carboxyltransferase subunit alpha</shortName>
        <ecNumber evidence="1">2.1.3.15</ecNumber>
    </recommendedName>
</protein>
<sequence>MASYLDFEKNIQQIDEDIINAQIKGDTEAVSILKKNLEKEISKTYKNLSDFQRLQLARHPDRPYALDYIELILNDAHEIHGDRAFRDDPAIVCFMGYLGEKKIIVIGEQKGRGTKDKIARNFGMPHPEGYRKALRVARLAEKFQIPILFLIDTPGAYPGIGAEERGQSEAIARNLYELSDLKIPTIAIVIGEGGSGGALAIGVADRLAMMKNSVFSVISPEGCAAILWNDPAKSEAATKVMKVTADDLKSQGLIDDVIDEPTNGAHRNKEAAAVAIADYVKKSLNELENIDVRELSANRMQKILKLGAYQEA</sequence>
<proteinExistence type="inferred from homology"/>
<reference key="1">
    <citation type="submission" date="2006-12" db="EMBL/GenBank/DDBJ databases">
        <authorList>
            <person name="Fouts D.E."/>
            <person name="Nelson K.E."/>
            <person name="Sebastian Y."/>
        </authorList>
    </citation>
    <scope>NUCLEOTIDE SEQUENCE [LARGE SCALE GENOMIC DNA]</scope>
    <source>
        <strain>81-176</strain>
    </source>
</reference>
<dbReference type="EC" id="2.1.3.15" evidence="1"/>
<dbReference type="EMBL" id="CP000538">
    <property type="protein sequence ID" value="EAQ73334.1"/>
    <property type="molecule type" value="Genomic_DNA"/>
</dbReference>
<dbReference type="RefSeq" id="WP_002869266.1">
    <property type="nucleotide sequence ID" value="NC_008787.1"/>
</dbReference>
<dbReference type="SMR" id="A1VYG1"/>
<dbReference type="KEGG" id="cjj:CJJ81176_0470"/>
<dbReference type="eggNOG" id="COG0825">
    <property type="taxonomic scope" value="Bacteria"/>
</dbReference>
<dbReference type="HOGENOM" id="CLU_015486_0_2_7"/>
<dbReference type="UniPathway" id="UPA00655">
    <property type="reaction ID" value="UER00711"/>
</dbReference>
<dbReference type="Proteomes" id="UP000000646">
    <property type="component" value="Chromosome"/>
</dbReference>
<dbReference type="GO" id="GO:0009317">
    <property type="term" value="C:acetyl-CoA carboxylase complex"/>
    <property type="evidence" value="ECO:0007669"/>
    <property type="project" value="InterPro"/>
</dbReference>
<dbReference type="GO" id="GO:0003989">
    <property type="term" value="F:acetyl-CoA carboxylase activity"/>
    <property type="evidence" value="ECO:0007669"/>
    <property type="project" value="InterPro"/>
</dbReference>
<dbReference type="GO" id="GO:0005524">
    <property type="term" value="F:ATP binding"/>
    <property type="evidence" value="ECO:0007669"/>
    <property type="project" value="UniProtKB-KW"/>
</dbReference>
<dbReference type="GO" id="GO:0016743">
    <property type="term" value="F:carboxyl- or carbamoyltransferase activity"/>
    <property type="evidence" value="ECO:0007669"/>
    <property type="project" value="UniProtKB-UniRule"/>
</dbReference>
<dbReference type="GO" id="GO:0006633">
    <property type="term" value="P:fatty acid biosynthetic process"/>
    <property type="evidence" value="ECO:0007669"/>
    <property type="project" value="UniProtKB-KW"/>
</dbReference>
<dbReference type="GO" id="GO:2001295">
    <property type="term" value="P:malonyl-CoA biosynthetic process"/>
    <property type="evidence" value="ECO:0007669"/>
    <property type="project" value="UniProtKB-UniRule"/>
</dbReference>
<dbReference type="Gene3D" id="3.90.226.10">
    <property type="entry name" value="2-enoyl-CoA Hydratase, Chain A, domain 1"/>
    <property type="match status" value="1"/>
</dbReference>
<dbReference type="HAMAP" id="MF_00823">
    <property type="entry name" value="AcetylCoA_CT_alpha"/>
    <property type="match status" value="1"/>
</dbReference>
<dbReference type="InterPro" id="IPR001095">
    <property type="entry name" value="Acetyl_CoA_COase_a_su"/>
</dbReference>
<dbReference type="InterPro" id="IPR029045">
    <property type="entry name" value="ClpP/crotonase-like_dom_sf"/>
</dbReference>
<dbReference type="InterPro" id="IPR011763">
    <property type="entry name" value="COA_CT_C"/>
</dbReference>
<dbReference type="NCBIfam" id="TIGR00513">
    <property type="entry name" value="accA"/>
    <property type="match status" value="1"/>
</dbReference>
<dbReference type="NCBIfam" id="NF041504">
    <property type="entry name" value="AccA_sub"/>
    <property type="match status" value="1"/>
</dbReference>
<dbReference type="NCBIfam" id="NF004344">
    <property type="entry name" value="PRK05724.1"/>
    <property type="match status" value="1"/>
</dbReference>
<dbReference type="PANTHER" id="PTHR42853">
    <property type="entry name" value="ACETYL-COENZYME A CARBOXYLASE CARBOXYL TRANSFERASE SUBUNIT ALPHA"/>
    <property type="match status" value="1"/>
</dbReference>
<dbReference type="PANTHER" id="PTHR42853:SF3">
    <property type="entry name" value="ACETYL-COENZYME A CARBOXYLASE CARBOXYL TRANSFERASE SUBUNIT ALPHA, CHLOROPLASTIC"/>
    <property type="match status" value="1"/>
</dbReference>
<dbReference type="Pfam" id="PF03255">
    <property type="entry name" value="ACCA"/>
    <property type="match status" value="1"/>
</dbReference>
<dbReference type="PRINTS" id="PR01069">
    <property type="entry name" value="ACCCTRFRASEA"/>
</dbReference>
<dbReference type="SUPFAM" id="SSF52096">
    <property type="entry name" value="ClpP/crotonase"/>
    <property type="match status" value="1"/>
</dbReference>
<dbReference type="PROSITE" id="PS50989">
    <property type="entry name" value="COA_CT_CTER"/>
    <property type="match status" value="1"/>
</dbReference>
<accession>A1VYG1</accession>
<organism>
    <name type="scientific">Campylobacter jejuni subsp. jejuni serotype O:23/36 (strain 81-176)</name>
    <dbReference type="NCBI Taxonomy" id="354242"/>
    <lineage>
        <taxon>Bacteria</taxon>
        <taxon>Pseudomonadati</taxon>
        <taxon>Campylobacterota</taxon>
        <taxon>Epsilonproteobacteria</taxon>
        <taxon>Campylobacterales</taxon>
        <taxon>Campylobacteraceae</taxon>
        <taxon>Campylobacter</taxon>
    </lineage>
</organism>
<name>ACCA_CAMJJ</name>
<keyword id="KW-0067">ATP-binding</keyword>
<keyword id="KW-0963">Cytoplasm</keyword>
<keyword id="KW-0275">Fatty acid biosynthesis</keyword>
<keyword id="KW-0276">Fatty acid metabolism</keyword>
<keyword id="KW-0444">Lipid biosynthesis</keyword>
<keyword id="KW-0443">Lipid metabolism</keyword>
<keyword id="KW-0547">Nucleotide-binding</keyword>
<keyword id="KW-0808">Transferase</keyword>
<gene>
    <name evidence="1" type="primary">accA</name>
    <name type="ordered locus">CJJ81176_0470</name>
</gene>
<comment type="function">
    <text evidence="1">Component of the acetyl coenzyme A carboxylase (ACC) complex. First, biotin carboxylase catalyzes the carboxylation of biotin on its carrier protein (BCCP) and then the CO(2) group is transferred by the carboxyltransferase to acetyl-CoA to form malonyl-CoA.</text>
</comment>
<comment type="catalytic activity">
    <reaction evidence="1">
        <text>N(6)-carboxybiotinyl-L-lysyl-[protein] + acetyl-CoA = N(6)-biotinyl-L-lysyl-[protein] + malonyl-CoA</text>
        <dbReference type="Rhea" id="RHEA:54728"/>
        <dbReference type="Rhea" id="RHEA-COMP:10505"/>
        <dbReference type="Rhea" id="RHEA-COMP:10506"/>
        <dbReference type="ChEBI" id="CHEBI:57288"/>
        <dbReference type="ChEBI" id="CHEBI:57384"/>
        <dbReference type="ChEBI" id="CHEBI:83144"/>
        <dbReference type="ChEBI" id="CHEBI:83145"/>
        <dbReference type="EC" id="2.1.3.15"/>
    </reaction>
</comment>
<comment type="pathway">
    <text evidence="1">Lipid metabolism; malonyl-CoA biosynthesis; malonyl-CoA from acetyl-CoA: step 1/1.</text>
</comment>
<comment type="subunit">
    <text evidence="1">Acetyl-CoA carboxylase is a heterohexamer composed of biotin carboxyl carrier protein (AccB), biotin carboxylase (AccC) and two subunits each of ACCase subunit alpha (AccA) and ACCase subunit beta (AccD).</text>
</comment>
<comment type="subcellular location">
    <subcellularLocation>
        <location evidence="1">Cytoplasm</location>
    </subcellularLocation>
</comment>
<comment type="similarity">
    <text evidence="1">Belongs to the AccA family.</text>
</comment>